<feature type="chain" id="PRO_0000080538" description="Beta-1,4-galactosyltransferase 3">
    <location>
        <begin position="1"/>
        <end position="395"/>
    </location>
</feature>
<feature type="topological domain" description="Cytoplasmic" evidence="3">
    <location>
        <begin position="1"/>
        <end position="10"/>
    </location>
</feature>
<feature type="transmembrane region" description="Helical; Signal-anchor for type II membrane protein" evidence="3">
    <location>
        <begin position="11"/>
        <end position="31"/>
    </location>
</feature>
<feature type="topological domain" description="Lumenal" evidence="3">
    <location>
        <begin position="32"/>
        <end position="395"/>
    </location>
</feature>
<feature type="region of interest" description="Disordered" evidence="4">
    <location>
        <begin position="340"/>
        <end position="395"/>
    </location>
</feature>
<feature type="compositionally biased region" description="Low complexity" evidence="4">
    <location>
        <begin position="352"/>
        <end position="364"/>
    </location>
</feature>
<feature type="binding site" evidence="1">
    <location>
        <begin position="132"/>
        <end position="136"/>
    </location>
    <ligand>
        <name>UDP-alpha-D-galactose</name>
        <dbReference type="ChEBI" id="CHEBI:66914"/>
    </ligand>
</feature>
<feature type="binding site" evidence="1">
    <location>
        <begin position="171"/>
        <end position="173"/>
    </location>
    <ligand>
        <name>UDP-alpha-D-galactose</name>
        <dbReference type="ChEBI" id="CHEBI:66914"/>
    </ligand>
</feature>
<feature type="binding site" evidence="1">
    <location>
        <begin position="198"/>
        <end position="199"/>
    </location>
    <ligand>
        <name>UDP-alpha-D-galactose</name>
        <dbReference type="ChEBI" id="CHEBI:66914"/>
    </ligand>
</feature>
<feature type="binding site" evidence="1">
    <location>
        <position position="199"/>
    </location>
    <ligand>
        <name>Mn(2+)</name>
        <dbReference type="ChEBI" id="CHEBI:29035"/>
    </ligand>
</feature>
<feature type="binding site" evidence="1">
    <location>
        <position position="228"/>
    </location>
    <ligand>
        <name>UDP-alpha-D-galactose</name>
        <dbReference type="ChEBI" id="CHEBI:66914"/>
    </ligand>
</feature>
<feature type="binding site" evidence="1">
    <location>
        <position position="260"/>
    </location>
    <ligand>
        <name>UDP-alpha-D-galactose</name>
        <dbReference type="ChEBI" id="CHEBI:66914"/>
    </ligand>
</feature>
<feature type="binding site" evidence="1">
    <location>
        <begin position="262"/>
        <end position="265"/>
    </location>
    <ligand>
        <name>N-acetyl-D-glucosamine</name>
        <dbReference type="ChEBI" id="CHEBI:506227"/>
    </ligand>
</feature>
<feature type="binding site" evidence="1">
    <location>
        <begin position="293"/>
        <end position="295"/>
    </location>
    <ligand>
        <name>UDP-alpha-D-galactose</name>
        <dbReference type="ChEBI" id="CHEBI:66914"/>
    </ligand>
</feature>
<feature type="binding site" evidence="1">
    <location>
        <position position="293"/>
    </location>
    <ligand>
        <name>Mn(2+)</name>
        <dbReference type="ChEBI" id="CHEBI:29035"/>
    </ligand>
</feature>
<feature type="binding site" evidence="1">
    <location>
        <position position="305"/>
    </location>
    <ligand>
        <name>N-acetyl-D-glucosamine</name>
        <dbReference type="ChEBI" id="CHEBI:506227"/>
    </ligand>
</feature>
<feature type="glycosylation site" description="N-linked (GlcNAc...) asparagine" evidence="3">
    <location>
        <position position="57"/>
    </location>
</feature>
<feature type="glycosylation site" description="N-linked (GlcNAc...) asparagine" evidence="3">
    <location>
        <position position="168"/>
    </location>
</feature>
<feature type="glycosylation site" description="N-linked (GlcNAc...) asparagine" evidence="5">
    <location>
        <position position="339"/>
    </location>
</feature>
<feature type="glycosylation site" description="N-linked (GlcNAc...) asparagine" evidence="3">
    <location>
        <position position="387"/>
    </location>
</feature>
<feature type="disulfide bond" evidence="1">
    <location>
        <begin position="79"/>
        <end position="121"/>
    </location>
</feature>
<feature type="disulfide bond" evidence="1">
    <location>
        <begin position="192"/>
        <end position="211"/>
    </location>
</feature>
<feature type="sequence conflict" description="In Ref. 1; AAF22221." evidence="6" ref="1">
    <original>S</original>
    <variation>A</variation>
    <location>
        <position position="353"/>
    </location>
</feature>
<organism>
    <name type="scientific">Mus musculus</name>
    <name type="common">Mouse</name>
    <dbReference type="NCBI Taxonomy" id="10090"/>
    <lineage>
        <taxon>Eukaryota</taxon>
        <taxon>Metazoa</taxon>
        <taxon>Chordata</taxon>
        <taxon>Craniata</taxon>
        <taxon>Vertebrata</taxon>
        <taxon>Euteleostomi</taxon>
        <taxon>Mammalia</taxon>
        <taxon>Eutheria</taxon>
        <taxon>Euarchontoglires</taxon>
        <taxon>Glires</taxon>
        <taxon>Rodentia</taxon>
        <taxon>Myomorpha</taxon>
        <taxon>Muroidea</taxon>
        <taxon>Muridae</taxon>
        <taxon>Murinae</taxon>
        <taxon>Mus</taxon>
        <taxon>Mus</taxon>
    </lineage>
</organism>
<sequence length="395" mass="44084">MLRRLLERPCTLALLVGSQLAVMMYLSLGGFRSLSALFGRDPGPTFDYSHPHDVYSNLSHLPAAPGAAGAPPAQALPYCPERSPFLVGPVSVSFSPVPSLAEIVERNPRVESGGRYRPAGCEPRSRTAIIVPHRAREHHLRLLLYHLHPFLQRQQLAYGIYVIHQAGNGTFNRAKLLNVGVREALRDEEWDCLFLHDVDLLPENDHNLYVCDPRGPRHVAVAMNKFGYSLPYPQYFGGVSALTPDQYLKMNGFPNEYWGWGGEDDDIATRVRLAGMKISRPPTSVGHYKMVKHRGDKGNEENPHRFDLLVRTQNSWTQDGMNSLTYRLLARELGPLYTNITADIGTDPRGPRSPSGPRYPPGSSQAFRQEMLQRRPPARPGPLPTANHTAPRGSH</sequence>
<proteinExistence type="evidence at protein level"/>
<comment type="function">
    <text evidence="2">Responsible for the synthesis of complex-type N-linked oligosaccharides in many glycoproteins as well as the carbohydrate moieties of glycolipids.</text>
</comment>
<comment type="catalytic activity">
    <reaction evidence="2">
        <text>an N-acetyl-beta-D-glucosaminyl derivative + UDP-alpha-D-galactose = a beta-D-galactosyl-(1-&gt;4)-N-acetyl-beta-D-glucosaminyl derivative + UDP + H(+)</text>
        <dbReference type="Rhea" id="RHEA:22932"/>
        <dbReference type="ChEBI" id="CHEBI:15378"/>
        <dbReference type="ChEBI" id="CHEBI:58223"/>
        <dbReference type="ChEBI" id="CHEBI:61631"/>
        <dbReference type="ChEBI" id="CHEBI:66914"/>
        <dbReference type="ChEBI" id="CHEBI:133507"/>
        <dbReference type="EC" id="2.4.1.38"/>
    </reaction>
    <physiologicalReaction direction="left-to-right" evidence="2">
        <dbReference type="Rhea" id="RHEA:22933"/>
    </physiologicalReaction>
</comment>
<comment type="catalytic activity">
    <reaction evidence="2">
        <text>N-acetyl-D-glucosamine + UDP-alpha-D-galactose = beta-D-galactosyl-(1-&gt;4)-N-acetyl-D-glucosamine + UDP + H(+)</text>
        <dbReference type="Rhea" id="RHEA:17745"/>
        <dbReference type="ChEBI" id="CHEBI:15378"/>
        <dbReference type="ChEBI" id="CHEBI:58223"/>
        <dbReference type="ChEBI" id="CHEBI:60152"/>
        <dbReference type="ChEBI" id="CHEBI:66914"/>
        <dbReference type="ChEBI" id="CHEBI:506227"/>
        <dbReference type="EC" id="2.4.1.90"/>
    </reaction>
    <physiologicalReaction direction="left-to-right" evidence="2">
        <dbReference type="Rhea" id="RHEA:17746"/>
    </physiologicalReaction>
</comment>
<comment type="catalytic activity">
    <reaction evidence="2">
        <text>a beta-D-GlcNAc-(1-&gt;3)-beta-D-Gal-(1-&gt;4)-beta-D-Glc-(1&lt;-&gt;1)-Cer(d18:1(4E)) + UDP-alpha-D-galactose = a neolactoside nLc4Cer(d18:1(4E)) + UDP + H(+)</text>
        <dbReference type="Rhea" id="RHEA:31499"/>
        <dbReference type="ChEBI" id="CHEBI:15378"/>
        <dbReference type="ChEBI" id="CHEBI:17006"/>
        <dbReference type="ChEBI" id="CHEBI:17103"/>
        <dbReference type="ChEBI" id="CHEBI:58223"/>
        <dbReference type="ChEBI" id="CHEBI:66914"/>
        <dbReference type="EC" id="2.4.1.275"/>
    </reaction>
    <physiologicalReaction direction="left-to-right" evidence="2">
        <dbReference type="Rhea" id="RHEA:31500"/>
    </physiologicalReaction>
</comment>
<comment type="catalytic activity">
    <reaction evidence="2">
        <text>a beta-D-glucosylceramide + UDP-alpha-D-galactose = a beta-D-galactosyl-(1-&gt;4)-beta-D-glucosyl-(1&lt;-&gt;1)-ceramide + UDP + H(+)</text>
        <dbReference type="Rhea" id="RHEA:62552"/>
        <dbReference type="ChEBI" id="CHEBI:15378"/>
        <dbReference type="ChEBI" id="CHEBI:58223"/>
        <dbReference type="ChEBI" id="CHEBI:66914"/>
        <dbReference type="ChEBI" id="CHEBI:79208"/>
        <dbReference type="ChEBI" id="CHEBI:83264"/>
    </reaction>
    <physiologicalReaction direction="left-to-right" evidence="2">
        <dbReference type="Rhea" id="RHEA:62553"/>
    </physiologicalReaction>
</comment>
<comment type="catalytic activity">
    <reaction evidence="2">
        <text>a neolactoside IV(3)-beta-GlcNAc-nLc4Cer + UDP-alpha-D-galactose = a neolactoside nLc6Cer + UDP + H(+)</text>
        <dbReference type="Rhea" id="RHEA:62548"/>
        <dbReference type="ChEBI" id="CHEBI:15378"/>
        <dbReference type="ChEBI" id="CHEBI:58223"/>
        <dbReference type="ChEBI" id="CHEBI:66914"/>
        <dbReference type="ChEBI" id="CHEBI:90357"/>
        <dbReference type="ChEBI" id="CHEBI:144378"/>
    </reaction>
    <physiologicalReaction direction="left-to-right" evidence="2">
        <dbReference type="Rhea" id="RHEA:62549"/>
    </physiologicalReaction>
</comment>
<comment type="cofactor">
    <cofactor evidence="1">
        <name>Mn(2+)</name>
        <dbReference type="ChEBI" id="CHEBI:29035"/>
    </cofactor>
</comment>
<comment type="pathway">
    <text evidence="2">Protein modification; protein glycosylation.</text>
</comment>
<comment type="subcellular location">
    <subcellularLocation>
        <location evidence="1">Golgi apparatus</location>
        <location evidence="1">Golgi stack membrane</location>
        <topology evidence="1">Single-pass type II membrane protein</topology>
    </subcellularLocation>
    <text evidence="1">Trans cisternae of Golgi stack.</text>
</comment>
<comment type="similarity">
    <text evidence="6">Belongs to the glycosyltransferase 7 family.</text>
</comment>
<comment type="online information" name="Functional Glycomics Gateway - GTase">
    <link uri="http://www.functionalglycomics.org/glycomics/molecule/jsp/glycoEnzyme/viewGlycoEnzyme.jsp?gbpId=gt_mou_462"/>
    <text>b4GalT3</text>
</comment>
<protein>
    <recommendedName>
        <fullName evidence="6">Beta-1,4-galactosyltransferase 3</fullName>
        <shortName>Beta-1,4-GalTase 3</shortName>
        <shortName>Beta4Gal-T3</shortName>
        <shortName>b4Gal-T3</shortName>
        <ecNumber evidence="2">2.4.1.-</ecNumber>
    </recommendedName>
    <alternativeName>
        <fullName>Beta-N-acetylglucosaminyl-glycolipid beta-1,4-galactosyltransferase</fullName>
    </alternativeName>
    <alternativeName>
        <fullName>Beta-N-acetylglucosaminylglycopeptide beta-1,4-galactosyltransferase</fullName>
        <ecNumber evidence="2">2.4.1.38</ecNumber>
    </alternativeName>
    <alternativeName>
        <fullName>N-acetyllactosamine synthase</fullName>
        <ecNumber evidence="2">2.4.1.90</ecNumber>
    </alternativeName>
    <alternativeName>
        <fullName>Nal synthase</fullName>
    </alternativeName>
    <alternativeName>
        <fullName>Neolactotriaosylceramide beta-1,4-galactosyltransferase</fullName>
        <ecNumber>2.4.1.275</ecNumber>
    </alternativeName>
    <alternativeName>
        <fullName>UDP-Gal:beta-GlcNAc beta-1,4-galactosyltransferase 3</fullName>
    </alternativeName>
    <alternativeName>
        <fullName>UDP-galactose:beta-N-acetylglucosamine beta-1,4-galactosyltransferase 3</fullName>
    </alternativeName>
</protein>
<name>B4GT3_MOUSE</name>
<accession>Q91YY2</accession>
<accession>Q9QY13</accession>
<evidence type="ECO:0000250" key="1"/>
<evidence type="ECO:0000250" key="2">
    <source>
        <dbReference type="UniProtKB" id="O60512"/>
    </source>
</evidence>
<evidence type="ECO:0000255" key="3"/>
<evidence type="ECO:0000256" key="4">
    <source>
        <dbReference type="SAM" id="MobiDB-lite"/>
    </source>
</evidence>
<evidence type="ECO:0000269" key="5">
    <source>
    </source>
</evidence>
<evidence type="ECO:0000305" key="6"/>
<evidence type="ECO:0000312" key="7">
    <source>
        <dbReference type="MGI" id="MGI:1928767"/>
    </source>
</evidence>
<reference key="1">
    <citation type="journal article" date="1998" name="Glycobiology">
        <title>The expanding beta 4-galactosyltransferase gene family: messages from the databanks.</title>
        <authorList>
            <person name="Lo N.-W."/>
            <person name="Shaper J.H."/>
            <person name="Pevsner J."/>
            <person name="Shaper N.L."/>
        </authorList>
    </citation>
    <scope>NUCLEOTIDE SEQUENCE [MRNA]</scope>
</reference>
<reference key="2">
    <citation type="journal article" date="2004" name="Genome Res.">
        <title>The status, quality, and expansion of the NIH full-length cDNA project: the Mammalian Gene Collection (MGC).</title>
        <authorList>
            <consortium name="The MGC Project Team"/>
        </authorList>
    </citation>
    <scope>NUCLEOTIDE SEQUENCE [LARGE SCALE MRNA]</scope>
    <source>
        <strain>FVB/N</strain>
        <tissue>Mammary tumor</tissue>
    </source>
</reference>
<reference key="3">
    <citation type="journal article" date="2009" name="Nat. Biotechnol.">
        <title>Mass-spectrometric identification and relative quantification of N-linked cell surface glycoproteins.</title>
        <authorList>
            <person name="Wollscheid B."/>
            <person name="Bausch-Fluck D."/>
            <person name="Henderson C."/>
            <person name="O'Brien R."/>
            <person name="Bibel M."/>
            <person name="Schiess R."/>
            <person name="Aebersold R."/>
            <person name="Watts J.D."/>
        </authorList>
    </citation>
    <scope>GLYCOSYLATION [LARGE SCALE ANALYSIS] AT ASN-339</scope>
</reference>
<keyword id="KW-1015">Disulfide bond</keyword>
<keyword id="KW-0325">Glycoprotein</keyword>
<keyword id="KW-0328">Glycosyltransferase</keyword>
<keyword id="KW-0333">Golgi apparatus</keyword>
<keyword id="KW-0443">Lipid metabolism</keyword>
<keyword id="KW-0464">Manganese</keyword>
<keyword id="KW-0472">Membrane</keyword>
<keyword id="KW-0479">Metal-binding</keyword>
<keyword id="KW-1185">Reference proteome</keyword>
<keyword id="KW-0735">Signal-anchor</keyword>
<keyword id="KW-0808">Transferase</keyword>
<keyword id="KW-0812">Transmembrane</keyword>
<keyword id="KW-1133">Transmembrane helix</keyword>
<dbReference type="EC" id="2.4.1.-" evidence="2"/>
<dbReference type="EC" id="2.4.1.38" evidence="2"/>
<dbReference type="EC" id="2.4.1.90" evidence="2"/>
<dbReference type="EC" id="2.4.1.275"/>
<dbReference type="EMBL" id="AF142671">
    <property type="protein sequence ID" value="AAF22221.1"/>
    <property type="molecule type" value="mRNA"/>
</dbReference>
<dbReference type="EMBL" id="BC013619">
    <property type="protein sequence ID" value="AAH13619.1"/>
    <property type="molecule type" value="mRNA"/>
</dbReference>
<dbReference type="CCDS" id="CCDS15486.1"/>
<dbReference type="RefSeq" id="NP_001420403.1">
    <property type="nucleotide sequence ID" value="NM_001433474.1"/>
</dbReference>
<dbReference type="RefSeq" id="NP_065604.2">
    <property type="nucleotide sequence ID" value="NM_020579.3"/>
</dbReference>
<dbReference type="SMR" id="Q91YY2"/>
<dbReference type="FunCoup" id="Q91YY2">
    <property type="interactions" value="3175"/>
</dbReference>
<dbReference type="STRING" id="10090.ENSMUSP00000106945"/>
<dbReference type="CAZy" id="GT7">
    <property type="family name" value="Glycosyltransferase Family 7"/>
</dbReference>
<dbReference type="GlyConnect" id="2150">
    <property type="glycosylation" value="2 N-Linked glycans (1 site)"/>
</dbReference>
<dbReference type="GlyCosmos" id="Q91YY2">
    <property type="glycosylation" value="4 sites, 2 glycans"/>
</dbReference>
<dbReference type="GlyGen" id="Q91YY2">
    <property type="glycosylation" value="4 sites, 6 N-linked glycans (4 sites)"/>
</dbReference>
<dbReference type="iPTMnet" id="Q91YY2"/>
<dbReference type="PhosphoSitePlus" id="Q91YY2"/>
<dbReference type="PaxDb" id="10090-ENSMUSP00000106945"/>
<dbReference type="ProteomicsDB" id="273461"/>
<dbReference type="Antibodypedia" id="2534">
    <property type="antibodies" value="222 antibodies from 27 providers"/>
</dbReference>
<dbReference type="DNASU" id="57370"/>
<dbReference type="Ensembl" id="ENSMUST00000064272.10">
    <property type="protein sequence ID" value="ENSMUSP00000066353.4"/>
    <property type="gene ID" value="ENSMUSG00000052423.16"/>
</dbReference>
<dbReference type="Ensembl" id="ENSMUST00000111313.10">
    <property type="protein sequence ID" value="ENSMUSP00000106945.4"/>
    <property type="gene ID" value="ENSMUSG00000052423.16"/>
</dbReference>
<dbReference type="GeneID" id="57370"/>
<dbReference type="KEGG" id="mmu:57370"/>
<dbReference type="UCSC" id="uc007dnp.2">
    <property type="organism name" value="mouse"/>
</dbReference>
<dbReference type="AGR" id="MGI:1928767"/>
<dbReference type="CTD" id="8703"/>
<dbReference type="MGI" id="MGI:1928767">
    <property type="gene designation" value="B4galt3"/>
</dbReference>
<dbReference type="VEuPathDB" id="HostDB:ENSMUSG00000052423"/>
<dbReference type="eggNOG" id="KOG3916">
    <property type="taxonomic scope" value="Eukaryota"/>
</dbReference>
<dbReference type="GeneTree" id="ENSGT00940000158549"/>
<dbReference type="HOGENOM" id="CLU_044391_1_2_1"/>
<dbReference type="InParanoid" id="Q91YY2"/>
<dbReference type="OMA" id="CDPGGPR"/>
<dbReference type="OrthoDB" id="10016069at2759"/>
<dbReference type="PhylomeDB" id="Q91YY2"/>
<dbReference type="TreeFam" id="TF312834"/>
<dbReference type="Reactome" id="R-MMU-2022854">
    <property type="pathway name" value="Keratan sulfate biosynthesis"/>
</dbReference>
<dbReference type="Reactome" id="R-MMU-975577">
    <property type="pathway name" value="N-Glycan antennae elongation"/>
</dbReference>
<dbReference type="UniPathway" id="UPA00378"/>
<dbReference type="BioGRID-ORCS" id="57370">
    <property type="hits" value="6 hits in 80 CRISPR screens"/>
</dbReference>
<dbReference type="ChiTaRS" id="B4galt3">
    <property type="organism name" value="mouse"/>
</dbReference>
<dbReference type="PRO" id="PR:Q91YY2"/>
<dbReference type="Proteomes" id="UP000000589">
    <property type="component" value="Chromosome 1"/>
</dbReference>
<dbReference type="RNAct" id="Q91YY2">
    <property type="molecule type" value="protein"/>
</dbReference>
<dbReference type="Bgee" id="ENSMUSG00000052423">
    <property type="expression patterns" value="Expressed in granulocyte and 258 other cell types or tissues"/>
</dbReference>
<dbReference type="ExpressionAtlas" id="Q91YY2">
    <property type="expression patterns" value="baseline and differential"/>
</dbReference>
<dbReference type="GO" id="GO:0005829">
    <property type="term" value="C:cytosol"/>
    <property type="evidence" value="ECO:0007669"/>
    <property type="project" value="Ensembl"/>
</dbReference>
<dbReference type="GO" id="GO:0032580">
    <property type="term" value="C:Golgi cisterna membrane"/>
    <property type="evidence" value="ECO:0007669"/>
    <property type="project" value="UniProtKB-SubCell"/>
</dbReference>
<dbReference type="GO" id="GO:0003831">
    <property type="term" value="F:beta-N-acetylglucosaminylglycopeptide beta-1,4-galactosyltransferase activity"/>
    <property type="evidence" value="ECO:0007669"/>
    <property type="project" value="UniProtKB-EC"/>
</dbReference>
<dbReference type="GO" id="GO:0046872">
    <property type="term" value="F:metal ion binding"/>
    <property type="evidence" value="ECO:0007669"/>
    <property type="project" value="UniProtKB-KW"/>
</dbReference>
<dbReference type="GO" id="GO:0003945">
    <property type="term" value="F:N-acetyllactosamine synthase activity"/>
    <property type="evidence" value="ECO:0007669"/>
    <property type="project" value="UniProtKB-EC"/>
</dbReference>
<dbReference type="GO" id="GO:0005975">
    <property type="term" value="P:carbohydrate metabolic process"/>
    <property type="evidence" value="ECO:0007669"/>
    <property type="project" value="InterPro"/>
</dbReference>
<dbReference type="GO" id="GO:0006682">
    <property type="term" value="P:galactosylceramide biosynthetic process"/>
    <property type="evidence" value="ECO:0007669"/>
    <property type="project" value="Ensembl"/>
</dbReference>
<dbReference type="GO" id="GO:0006486">
    <property type="term" value="P:protein glycosylation"/>
    <property type="evidence" value="ECO:0007669"/>
    <property type="project" value="UniProtKB-UniPathway"/>
</dbReference>
<dbReference type="CDD" id="cd00899">
    <property type="entry name" value="b4GalT"/>
    <property type="match status" value="1"/>
</dbReference>
<dbReference type="FunFam" id="3.90.550.10:FF:000028">
    <property type="entry name" value="beta-1,4-galactosyltransferase 1"/>
    <property type="match status" value="1"/>
</dbReference>
<dbReference type="Gene3D" id="3.90.550.10">
    <property type="entry name" value="Spore Coat Polysaccharide Biosynthesis Protein SpsA, Chain A"/>
    <property type="match status" value="1"/>
</dbReference>
<dbReference type="InterPro" id="IPR003859">
    <property type="entry name" value="Galactosyl_T"/>
</dbReference>
<dbReference type="InterPro" id="IPR027791">
    <property type="entry name" value="Galactosyl_T_C"/>
</dbReference>
<dbReference type="InterPro" id="IPR027995">
    <property type="entry name" value="Galactosyl_T_N"/>
</dbReference>
<dbReference type="InterPro" id="IPR029044">
    <property type="entry name" value="Nucleotide-diphossugar_trans"/>
</dbReference>
<dbReference type="PANTHER" id="PTHR19300">
    <property type="entry name" value="BETA-1,4-GALACTOSYLTRANSFERASE"/>
    <property type="match status" value="1"/>
</dbReference>
<dbReference type="PANTHER" id="PTHR19300:SF33">
    <property type="entry name" value="BETA-1,4-GALACTOSYLTRANSFERASE 3"/>
    <property type="match status" value="1"/>
</dbReference>
<dbReference type="Pfam" id="PF02709">
    <property type="entry name" value="Glyco_transf_7C"/>
    <property type="match status" value="1"/>
</dbReference>
<dbReference type="Pfam" id="PF13733">
    <property type="entry name" value="Glyco_transf_7N"/>
    <property type="match status" value="1"/>
</dbReference>
<dbReference type="PRINTS" id="PR02050">
    <property type="entry name" value="B14GALTRFASE"/>
</dbReference>
<dbReference type="SUPFAM" id="SSF53448">
    <property type="entry name" value="Nucleotide-diphospho-sugar transferases"/>
    <property type="match status" value="1"/>
</dbReference>
<gene>
    <name evidence="7" type="primary">B4galt3</name>
</gene>